<feature type="chain" id="PRO_0000204799" description="Hygromycin-B 4-O-kinase">
    <location>
        <begin position="1"/>
        <end position="341"/>
    </location>
</feature>
<feature type="active site" description="Proton acceptor" evidence="1">
    <location>
        <position position="198"/>
    </location>
</feature>
<feature type="helix" evidence="4">
    <location>
        <begin position="10"/>
        <end position="16"/>
    </location>
</feature>
<feature type="turn" evidence="4">
    <location>
        <begin position="17"/>
        <end position="19"/>
    </location>
</feature>
<feature type="strand" evidence="4">
    <location>
        <begin position="23"/>
        <end position="30"/>
    </location>
</feature>
<feature type="strand" evidence="4">
    <location>
        <begin position="32"/>
        <end position="41"/>
    </location>
</feature>
<feature type="strand" evidence="4">
    <location>
        <begin position="44"/>
        <end position="52"/>
    </location>
</feature>
<feature type="helix" evidence="4">
    <location>
        <begin position="55"/>
        <end position="67"/>
    </location>
</feature>
<feature type="strand" evidence="4">
    <location>
        <begin position="70"/>
        <end position="72"/>
    </location>
</feature>
<feature type="strand" evidence="4">
    <location>
        <begin position="77"/>
        <end position="86"/>
    </location>
</feature>
<feature type="strand" evidence="4">
    <location>
        <begin position="88"/>
        <end position="93"/>
    </location>
</feature>
<feature type="strand" evidence="4">
    <location>
        <begin position="97"/>
        <end position="99"/>
    </location>
</feature>
<feature type="turn" evidence="4">
    <location>
        <begin position="100"/>
        <end position="102"/>
    </location>
</feature>
<feature type="helix" evidence="4">
    <location>
        <begin position="105"/>
        <end position="107"/>
    </location>
</feature>
<feature type="helix" evidence="4">
    <location>
        <begin position="109"/>
        <end position="111"/>
    </location>
</feature>
<feature type="helix" evidence="4">
    <location>
        <begin position="112"/>
        <end position="124"/>
    </location>
</feature>
<feature type="strand" evidence="4">
    <location>
        <begin position="133"/>
        <end position="136"/>
    </location>
</feature>
<feature type="strand" evidence="4">
    <location>
        <begin position="140"/>
        <end position="146"/>
    </location>
</feature>
<feature type="helix" evidence="4">
    <location>
        <begin position="147"/>
        <end position="152"/>
    </location>
</feature>
<feature type="helix" evidence="4">
    <location>
        <begin position="153"/>
        <end position="155"/>
    </location>
</feature>
<feature type="turn" evidence="4">
    <location>
        <begin position="157"/>
        <end position="159"/>
    </location>
</feature>
<feature type="helix" evidence="4">
    <location>
        <begin position="162"/>
        <end position="164"/>
    </location>
</feature>
<feature type="helix" evidence="4">
    <location>
        <begin position="168"/>
        <end position="184"/>
    </location>
</feature>
<feature type="helix" evidence="4">
    <location>
        <begin position="185"/>
        <end position="187"/>
    </location>
</feature>
<feature type="strand" evidence="4">
    <location>
        <begin position="193"/>
        <end position="195"/>
    </location>
</feature>
<feature type="strand" evidence="4">
    <location>
        <begin position="204"/>
        <end position="207"/>
    </location>
</feature>
<feature type="strand" evidence="4">
    <location>
        <begin position="210"/>
        <end position="214"/>
    </location>
</feature>
<feature type="helix" evidence="5">
    <location>
        <begin position="217"/>
        <end position="219"/>
    </location>
</feature>
<feature type="strand" evidence="4">
    <location>
        <begin position="221"/>
        <end position="223"/>
    </location>
</feature>
<feature type="helix" evidence="4">
    <location>
        <begin position="226"/>
        <end position="235"/>
    </location>
</feature>
<feature type="turn" evidence="4">
    <location>
        <begin position="236"/>
        <end position="238"/>
    </location>
</feature>
<feature type="helix" evidence="4">
    <location>
        <begin position="240"/>
        <end position="252"/>
    </location>
</feature>
<feature type="helix" evidence="4">
    <location>
        <begin position="254"/>
        <end position="257"/>
    </location>
</feature>
<feature type="helix" evidence="4">
    <location>
        <begin position="260"/>
        <end position="280"/>
    </location>
</feature>
<feature type="helix" evidence="4">
    <location>
        <begin position="283"/>
        <end position="300"/>
    </location>
</feature>
<organism>
    <name type="scientific">Escherichia coli</name>
    <dbReference type="NCBI Taxonomy" id="562"/>
    <lineage>
        <taxon>Bacteria</taxon>
        <taxon>Pseudomonadati</taxon>
        <taxon>Pseudomonadota</taxon>
        <taxon>Gammaproteobacteria</taxon>
        <taxon>Enterobacterales</taxon>
        <taxon>Enterobacteriaceae</taxon>
        <taxon>Escherichia</taxon>
    </lineage>
</organism>
<proteinExistence type="evidence at protein level"/>
<sequence length="341" mass="38033">MKKPELTATSVEKFLIEKFDSVSDLMQLSEGEESRAFSFDVGGRGYVLRVNSCADGFYKDRYVYRHFASAALPIPEVLDIGEFSESLTYCISRRAQGVTLQDLPETELPAVLQPVAEAMDAIAAADLSQTSGFGPFGPQGIGQYTTWRDFICAIADPHVYHWQTVMDDTVSASVAQALDELMLWAEDCPEVRHLVHADFGSNNVLTDNGRITAVIDWSEAMFGDSQYEVANIFFWRPWLACMEQQTRYFERRHPELAGSPRLRAYMLRIGLDQLYQSLVDGNFDDAAWAQGRCDAIVRSGAGTVGRTQIARRSAAVWTDGCVEVLADSGNRRPSTRPRAKE</sequence>
<name>KHYB_ECOLX</name>
<geneLocation type="plasmid">
    <name>pKC222</name>
</geneLocation>
<geneLocation type="plasmid">
    <name>pJR225</name>
</geneLocation>
<evidence type="ECO:0000250" key="1"/>
<evidence type="ECO:0000269" key="2">
    <source>
    </source>
</evidence>
<evidence type="ECO:0000305" key="3"/>
<evidence type="ECO:0007829" key="4">
    <source>
        <dbReference type="PDB" id="3W0O"/>
    </source>
</evidence>
<evidence type="ECO:0007829" key="5">
    <source>
        <dbReference type="PDB" id="3W0S"/>
    </source>
</evidence>
<protein>
    <recommendedName>
        <fullName>Hygromycin-B 4-O-kinase</fullName>
        <ecNumber>2.7.1.163</ecNumber>
    </recommendedName>
    <alternativeName>
        <fullName>APH(4)</fullName>
    </alternativeName>
    <alternativeName>
        <fullName>Hygromycin B phosphotransferase</fullName>
    </alternativeName>
    <alternativeName>
        <fullName>Hygromycin-B kinase</fullName>
    </alternativeName>
</protein>
<comment type="function">
    <text>The aminoglycoside phosphotransferases achieve inactivation of their antibiotic substrates by phosphorylation. Only phosphorylates hygromycin and closely related compounds such as demethyl analogs and destomycin.</text>
</comment>
<comment type="catalytic activity">
    <reaction evidence="2">
        <text>hygromycin B + ATP = 4-O-phosphohygromycin B + ADP + H(+)</text>
        <dbReference type="Rhea" id="RHEA:26064"/>
        <dbReference type="ChEBI" id="CHEBI:15378"/>
        <dbReference type="ChEBI" id="CHEBI:30616"/>
        <dbReference type="ChEBI" id="CHEBI:57971"/>
        <dbReference type="ChEBI" id="CHEBI:59917"/>
        <dbReference type="ChEBI" id="CHEBI:456216"/>
        <dbReference type="EC" id="2.7.1.163"/>
    </reaction>
</comment>
<comment type="miscellaneous">
    <text>Hygromycin B resistant E.coli were found to contain a Klebsiella derived plasmid, pJR225. This plasmid contains the hph gene.</text>
</comment>
<comment type="similarity">
    <text evidence="3">Belongs to the aminoglycoside phosphotransferase family.</text>
</comment>
<keyword id="KW-0002">3D-structure</keyword>
<keyword id="KW-0046">Antibiotic resistance</keyword>
<keyword id="KW-0067">ATP-binding</keyword>
<keyword id="KW-0418">Kinase</keyword>
<keyword id="KW-0547">Nucleotide-binding</keyword>
<keyword id="KW-0614">Plasmid</keyword>
<keyword id="KW-0808">Transferase</keyword>
<dbReference type="EC" id="2.7.1.163"/>
<dbReference type="EMBL" id="K01193">
    <property type="protein sequence ID" value="AAA92252.1"/>
    <property type="molecule type" value="Genomic_DNA"/>
</dbReference>
<dbReference type="EMBL" id="V01499">
    <property type="protein sequence ID" value="CAA24743.1"/>
    <property type="molecule type" value="Genomic_DNA"/>
</dbReference>
<dbReference type="EMBL" id="X01385">
    <property type="protein sequence ID" value="CAA25643.1"/>
    <property type="molecule type" value="Genomic_DNA"/>
</dbReference>
<dbReference type="EMBL" id="X89856">
    <property type="protein sequence ID" value="CAA61952.1"/>
    <property type="molecule type" value="Genomic_DNA"/>
</dbReference>
<dbReference type="EMBL" id="X89857">
    <property type="protein sequence ID" value="CAA61953.1"/>
    <property type="molecule type" value="Genomic_DNA"/>
</dbReference>
<dbReference type="PIR" id="A00668">
    <property type="entry name" value="WGECH"/>
</dbReference>
<dbReference type="PIR" id="S09645">
    <property type="entry name" value="S09645"/>
</dbReference>
<dbReference type="RefSeq" id="YP_006952299.1">
    <property type="nucleotide sequence ID" value="NC_019061.1"/>
</dbReference>
<dbReference type="PDB" id="3TYK">
    <property type="method" value="X-ray"/>
    <property type="resolution" value="1.95 A"/>
    <property type="chains" value="A=1-341"/>
</dbReference>
<dbReference type="PDB" id="3W0M">
    <property type="method" value="X-ray"/>
    <property type="resolution" value="1.90 A"/>
    <property type="chains" value="A=1-341"/>
</dbReference>
<dbReference type="PDB" id="3W0N">
    <property type="method" value="X-ray"/>
    <property type="resolution" value="1.90 A"/>
    <property type="chains" value="A=1-341"/>
</dbReference>
<dbReference type="PDB" id="3W0O">
    <property type="method" value="X-ray"/>
    <property type="resolution" value="1.50 A"/>
    <property type="chains" value="A=1-341"/>
</dbReference>
<dbReference type="PDB" id="3W0P">
    <property type="method" value="X-ray"/>
    <property type="resolution" value="2.00 A"/>
    <property type="chains" value="A=1-341"/>
</dbReference>
<dbReference type="PDB" id="3W0Q">
    <property type="method" value="X-ray"/>
    <property type="resolution" value="1.80 A"/>
    <property type="chains" value="A=1-341"/>
</dbReference>
<dbReference type="PDB" id="3W0R">
    <property type="method" value="X-ray"/>
    <property type="resolution" value="2.30 A"/>
    <property type="chains" value="A=1-341"/>
</dbReference>
<dbReference type="PDB" id="3W0S">
    <property type="method" value="X-ray"/>
    <property type="resolution" value="1.77 A"/>
    <property type="chains" value="A=1-341"/>
</dbReference>
<dbReference type="PDBsum" id="3TYK"/>
<dbReference type="PDBsum" id="3W0M"/>
<dbReference type="PDBsum" id="3W0N"/>
<dbReference type="PDBsum" id="3W0O"/>
<dbReference type="PDBsum" id="3W0P"/>
<dbReference type="PDBsum" id="3W0Q"/>
<dbReference type="PDBsum" id="3W0R"/>
<dbReference type="PDBsum" id="3W0S"/>
<dbReference type="SMR" id="P00557"/>
<dbReference type="CARD" id="ARO:3002655">
    <property type="molecule name" value="APH(4)-Ia"/>
    <property type="mechanism identifier" value="ARO:0001004"/>
    <property type="mechanism name" value="antibiotic inactivation"/>
</dbReference>
<dbReference type="KEGG" id="ag:CAA24743"/>
<dbReference type="BRENDA" id="2.7.1.163">
    <property type="organism ID" value="2026"/>
</dbReference>
<dbReference type="EvolutionaryTrace" id="P00557"/>
<dbReference type="GO" id="GO:0005524">
    <property type="term" value="F:ATP binding"/>
    <property type="evidence" value="ECO:0007669"/>
    <property type="project" value="UniProtKB-KW"/>
</dbReference>
<dbReference type="GO" id="GO:0016301">
    <property type="term" value="F:kinase activity"/>
    <property type="evidence" value="ECO:0007669"/>
    <property type="project" value="UniProtKB-KW"/>
</dbReference>
<dbReference type="GO" id="GO:0046677">
    <property type="term" value="P:response to antibiotic"/>
    <property type="evidence" value="ECO:0007669"/>
    <property type="project" value="UniProtKB-KW"/>
</dbReference>
<dbReference type="Gene3D" id="3.30.200.150">
    <property type="match status" value="1"/>
</dbReference>
<dbReference type="Gene3D" id="3.90.1200.10">
    <property type="match status" value="1"/>
</dbReference>
<dbReference type="InterPro" id="IPR051678">
    <property type="entry name" value="AGP_Transferase"/>
</dbReference>
<dbReference type="InterPro" id="IPR002575">
    <property type="entry name" value="Aminoglycoside_PTrfase"/>
</dbReference>
<dbReference type="InterPro" id="IPR011009">
    <property type="entry name" value="Kinase-like_dom_sf"/>
</dbReference>
<dbReference type="NCBIfam" id="NF000107">
    <property type="entry name" value="APH_4_Ia"/>
    <property type="match status" value="1"/>
</dbReference>
<dbReference type="PANTHER" id="PTHR21310:SF15">
    <property type="entry name" value="AMINOGLYCOSIDE PHOSPHOTRANSFERASE DOMAIN-CONTAINING PROTEIN"/>
    <property type="match status" value="1"/>
</dbReference>
<dbReference type="PANTHER" id="PTHR21310">
    <property type="entry name" value="AMINOGLYCOSIDE PHOSPHOTRANSFERASE-RELATED-RELATED"/>
    <property type="match status" value="1"/>
</dbReference>
<dbReference type="Pfam" id="PF01636">
    <property type="entry name" value="APH"/>
    <property type="match status" value="1"/>
</dbReference>
<dbReference type="SUPFAM" id="SSF56112">
    <property type="entry name" value="Protein kinase-like (PK-like)"/>
    <property type="match status" value="1"/>
</dbReference>
<accession>P00557</accession>
<gene>
    <name type="primary">hph</name>
</gene>
<reference key="1">
    <citation type="journal article" date="1983" name="Nucleic Acids Res.">
        <title>Analysis of a bacterial hygromycin B resistance gene by transcriptional and translational fusions and by DNA sequencing.</title>
        <authorList>
            <person name="Kaster K.R."/>
            <person name="Burgett S.G."/>
            <person name="Rao R.N."/>
            <person name="Ingolia T.D."/>
        </authorList>
    </citation>
    <scope>NUCLEOTIDE SEQUENCE [GENOMIC DNA]</scope>
    <source>
        <plasmid>pKC222</plasmid>
    </source>
</reference>
<reference key="2">
    <citation type="journal article" date="1983" name="Gene">
        <title>Plasmid-encoded hygromycin B resistance: the sequence of hygromycin B phosphotransferase gene and its expression in Escherichia coli and Saccharomyces cerevisiae.</title>
        <authorList>
            <person name="Gritz L."/>
            <person name="Davies J."/>
        </authorList>
    </citation>
    <scope>NUCLEOTIDE SEQUENCE [GENOMIC DNA]</scope>
    <source>
        <plasmid>pJR225</plasmid>
    </source>
</reference>
<reference key="3">
    <citation type="journal article" date="1984" name="Mol. Gen. Genet.">
        <title>Genes for gentamicin-(3)-N-acetyltransferases III and IV: I. Nucleotide sequence of the AAC(3)-IV gene and possible involvement of an IS140 element in its expression.</title>
        <authorList>
            <person name="Braeu B."/>
            <person name="Pilz U."/>
            <person name="Piepersberg W."/>
        </authorList>
    </citation>
    <scope>NUCLEOTIDE SEQUENCE [GENOMIC DNA] OF 1-39</scope>
</reference>
<reference key="4">
    <citation type="journal article" date="1983" name="Antimicrob. Agents Chemother.">
        <title>Genetic and enzymatic basis of hygromycin B resistance in Escherichia coli.</title>
        <authorList>
            <person name="Rao R.N."/>
            <person name="Allen N.E."/>
            <person name="Hobbs J.N. Jr."/>
            <person name="Alborn W.E. Jr."/>
            <person name="Kirst H.A."/>
            <person name="Paschal J.W."/>
        </authorList>
    </citation>
    <scope>CATALYTIC ACTIVITY</scope>
    <scope>SUBSTRATE SPECIFICITY</scope>
    <source>
        <plasmid>pJR225</plasmid>
    </source>
</reference>